<comment type="function">
    <text evidence="1">Protein covalently bound to the viral DNA that acts as a primer for viral genomic replication by DNA strand displacement. Assembles on the viral origin of replication in an initiation complex with viral polymerase, DBP, host NFIA and host POU2F1/OCT1. During initiation, the polymerase covalently couples the first dCTP with Ser-580 of pTP. The terminal protein stimulates the template activity over 20 fold compared to protein-free templates. Neo-synthesized viral genomes are linked to two preterminal proteins, one for each 5' end. These new genomes are encapsidated in the nucleus, and during capsid maturation by viral protease, preterminal protein is first cleaved into intermediary (iTP), then into mature TP. May play a role in host nuclear matrix localization of genomic DNA.</text>
</comment>
<comment type="subunit">
    <text evidence="1">Heterodimer with the polymerase; this heterodimer binds to bp 9 to 18 of the genome. Interacts with host POU2F1; POU2F1 binds to the auxiliary sequences in the inverted terminal repeats and tethers the pTP-POL heterodimer to the origin DNA thereby participating in the assembly of the pre-initiation complex (POL-TP-DBP-NFIA-POU2F1).</text>
</comment>
<comment type="subcellular location">
    <subcellularLocation>
        <location evidence="1">Host nucleus matrix</location>
    </subcellularLocation>
</comment>
<comment type="PTM">
    <text evidence="1">Preterminal protein is used to replicate viral genome, upon genomic encapsidation it is processed first into iTP and finally into TP by adenovirus protease.</text>
</comment>
<comment type="similarity">
    <text evidence="1">Belongs to the adenoviridae terminal protein family.</text>
</comment>
<organism>
    <name type="scientific">Snake adenovirus serotype 1</name>
    <name type="common">SnAdV-1</name>
    <dbReference type="NCBI Taxonomy" id="189830"/>
    <lineage>
        <taxon>Viruses</taxon>
        <taxon>Varidnaviria</taxon>
        <taxon>Bamfordvirae</taxon>
        <taxon>Preplasmiviricota</taxon>
        <taxon>Tectiliviricetes</taxon>
        <taxon>Rowavirales</taxon>
        <taxon>Adenoviridae</taxon>
        <taxon>Atadenovirus</taxon>
        <taxon>Snake atadenovirus A</taxon>
    </lineage>
</organism>
<dbReference type="EMBL" id="DQ106414">
    <property type="protein sequence ID" value="ABA47237.1"/>
    <property type="molecule type" value="Genomic_DNA"/>
</dbReference>
<dbReference type="RefSeq" id="YP_001552248.1">
    <property type="nucleotide sequence ID" value="NC_009989.1"/>
</dbReference>
<dbReference type="KEGG" id="vg:10973890"/>
<dbReference type="OrthoDB" id="4382at10239"/>
<dbReference type="Proteomes" id="UP000136605">
    <property type="component" value="Genome"/>
</dbReference>
<dbReference type="GO" id="GO:0044204">
    <property type="term" value="C:host cell nuclear matrix"/>
    <property type="evidence" value="ECO:0007669"/>
    <property type="project" value="UniProtKB-SubCell"/>
</dbReference>
<dbReference type="GO" id="GO:0003690">
    <property type="term" value="F:double-stranded DNA binding"/>
    <property type="evidence" value="ECO:0007669"/>
    <property type="project" value="UniProtKB-UniRule"/>
</dbReference>
<dbReference type="GO" id="GO:0003697">
    <property type="term" value="F:single-stranded DNA binding"/>
    <property type="evidence" value="ECO:0007669"/>
    <property type="project" value="UniProtKB-UniRule"/>
</dbReference>
<dbReference type="GO" id="GO:0006260">
    <property type="term" value="P:DNA replication"/>
    <property type="evidence" value="ECO:0007669"/>
    <property type="project" value="UniProtKB-KW"/>
</dbReference>
<dbReference type="GO" id="GO:0039687">
    <property type="term" value="P:viral DNA strand displacement replication"/>
    <property type="evidence" value="ECO:0007669"/>
    <property type="project" value="UniProtKB-UniRule"/>
</dbReference>
<dbReference type="HAMAP" id="MF_04061">
    <property type="entry name" value="ADV_TERM"/>
    <property type="match status" value="1"/>
</dbReference>
<dbReference type="InterPro" id="IPR003391">
    <property type="entry name" value="Adeno_preterminal"/>
</dbReference>
<dbReference type="Pfam" id="PF02459">
    <property type="entry name" value="Adeno_terminal"/>
    <property type="match status" value="1"/>
</dbReference>
<protein>
    <recommendedName>
        <fullName evidence="1">Preterminal protein</fullName>
        <shortName evidence="1">pTP</shortName>
    </recommendedName>
    <alternativeName>
        <fullName evidence="1">Bellett protein</fullName>
    </alternativeName>
    <alternativeName>
        <fullName evidence="1">Precursor terminal protein</fullName>
    </alternativeName>
    <component>
        <recommendedName>
            <fullName evidence="1">Intermediate terminal protein</fullName>
            <shortName evidence="1">iTP</shortName>
        </recommendedName>
    </component>
    <component>
        <recommendedName>
            <fullName evidence="1">Terminal protein</fullName>
            <shortName evidence="1">TP</shortName>
        </recommendedName>
    </component>
</protein>
<accession>A9CB87</accession>
<keyword id="KW-0190">Covalent protein-DNA linkage</keyword>
<keyword id="KW-0235">DNA replication</keyword>
<keyword id="KW-0238">DNA-binding</keyword>
<keyword id="KW-1048">Host nucleus</keyword>
<keyword id="KW-0597">Phosphoprotein</keyword>
<keyword id="KW-1185">Reference proteome</keyword>
<keyword id="KW-1194">Viral DNA replication</keyword>
<proteinExistence type="inferred from homology"/>
<organismHost>
    <name type="scientific">Pantherophis guttatus</name>
    <name type="common">Corn snake</name>
    <name type="synonym">Elaphe guttata</name>
    <dbReference type="NCBI Taxonomy" id="94885"/>
</organismHost>
<evidence type="ECO:0000255" key="1">
    <source>
        <dbReference type="HAMAP-Rule" id="MF_04061"/>
    </source>
</evidence>
<evidence type="ECO:0000256" key="2">
    <source>
        <dbReference type="SAM" id="MobiDB-lite"/>
    </source>
</evidence>
<reference key="1">
    <citation type="journal article" date="2002" name="J. Gen. Virol.">
        <title>Genetic analysis of an adenovirus isolated from corn snake (Elaphe guttata) implies common origin with the members of the proposed new genus Atadenovirus.</title>
        <authorList>
            <person name="Farkas S.L."/>
            <person name="Benko M."/>
            <person name="Elo P.T."/>
            <person name="Ursu K."/>
            <person name="Dan A."/>
            <person name="Ahne W."/>
            <person name="Harrach B."/>
        </authorList>
    </citation>
    <scope>NUCLEOTIDE SEQUENCE [GENOMIC DNA]</scope>
</reference>
<feature type="chain" id="PRO_0000425916" description="Preterminal protein" evidence="1">
    <location>
        <begin position="1"/>
        <end position="610"/>
    </location>
</feature>
<feature type="chain" id="PRO_0000425917" description="Intermediate terminal protein" evidence="1">
    <location>
        <begin position="178"/>
        <end position="610"/>
    </location>
</feature>
<feature type="chain" id="PRO_0000425918" description="Terminal protein" evidence="1">
    <location>
        <begin position="286"/>
        <end position="610"/>
    </location>
</feature>
<feature type="region of interest" description="Disordered" evidence="2">
    <location>
        <begin position="288"/>
        <end position="379"/>
    </location>
</feature>
<feature type="short sequence motif" description="Nuclear localization signal" evidence="1">
    <location>
        <begin position="328"/>
        <end position="337"/>
    </location>
</feature>
<feature type="compositionally biased region" description="Basic residues" evidence="2">
    <location>
        <begin position="331"/>
        <end position="340"/>
    </location>
</feature>
<feature type="compositionally biased region" description="Basic and acidic residues" evidence="2">
    <location>
        <begin position="341"/>
        <end position="350"/>
    </location>
</feature>
<feature type="site" description="Cleavage; by adenovirus protease" evidence="1">
    <location>
        <begin position="177"/>
        <end position="178"/>
    </location>
</feature>
<feature type="site" description="Cleavage; by adenovirus protease" evidence="1">
    <location>
        <begin position="285"/>
        <end position="286"/>
    </location>
</feature>
<feature type="site" description="Priming of strand displacement replication by covalently linking the first nucleotide of the new DNA chain" evidence="1">
    <location>
        <position position="549"/>
    </location>
</feature>
<feature type="modified residue" description="O-(5'-phospho-DNA)-serine" evidence="1">
    <location>
        <position position="549"/>
    </location>
</feature>
<gene>
    <name evidence="1" type="primary">PTP</name>
</gene>
<name>TERM_ADES1</name>
<sequence>MATRQIEAWHRLTGQRPQTLRYFMMTTDLNNRRILRQRTASEAGIRWASRYFEYPVTQLLDLRPFGPVTRNPPFEGEPPPNLLVGYYYVMKAINAYLFDQRTVSNISYNLQLALATNERAMVWQVLTDSSYSIDTGAFSRALDGNTEDLGGTVVQIQNAVMMDRVLTSLTVTPVRGLGAVVREQNNNGIAAFTVRPNFPQARVSKRDATLLRNICECKKALINYITWSPCPPLPCQLDLPFNDGWVEDFVRHFSSASPMENNSQNLVGDFAAVMTMGKQAGMRGGALTLRSGTQTGLPMRLRQREGRRAVTATMRRRRGQAVQSFIDSLPIRRRRRRGTRRQVEREDSVREPPSPGEGPSGIRAPEEEEESFSDDVGLSREDDRADFNQEVVDTIGQLIEELERELNPAAEESGFFNFSQRMYGLLLQLQRENRLTFQMILTWLSNFFVLEHLASTLFYLNEQFVRNGLARRNIGLQFAQVILRGRSDTGRELYTRVWYNREREAFHTLYDRIVTDFIAVTEMADTETMFQAPEEREQLLADMQYVENSGSVDEVIAQLQTRAQQTDSVELSFRIKFSGLVGYSQNPVIQRSFERTREAAIGRWRRQQQQ</sequence>